<protein>
    <recommendedName>
        <fullName>55 kDa erythrocyte membrane protein</fullName>
        <shortName>p55</shortName>
    </recommendedName>
    <alternativeName>
        <fullName>Membrane protein, palmitoylated 1</fullName>
    </alternativeName>
</protein>
<proteinExistence type="inferred from homology"/>
<dbReference type="EMBL" id="X81359">
    <property type="protein sequence ID" value="CAA57127.1"/>
    <property type="molecule type" value="Genomic_DNA"/>
</dbReference>
<dbReference type="PIR" id="A57627">
    <property type="entry name" value="A57627"/>
</dbReference>
<dbReference type="SMR" id="P49697"/>
<dbReference type="STRING" id="31033.ENSTRUP00000078286"/>
<dbReference type="eggNOG" id="KOG0609">
    <property type="taxonomic scope" value="Eukaryota"/>
</dbReference>
<dbReference type="InParanoid" id="P49697"/>
<dbReference type="Proteomes" id="UP000005226">
    <property type="component" value="Unplaced"/>
</dbReference>
<dbReference type="GO" id="GO:0016020">
    <property type="term" value="C:membrane"/>
    <property type="evidence" value="ECO:0007669"/>
    <property type="project" value="UniProtKB-SubCell"/>
</dbReference>
<dbReference type="CDD" id="cd00071">
    <property type="entry name" value="GMPK"/>
    <property type="match status" value="1"/>
</dbReference>
<dbReference type="CDD" id="cd10830">
    <property type="entry name" value="PDZ_MPP1-like"/>
    <property type="match status" value="1"/>
</dbReference>
<dbReference type="CDD" id="cd12080">
    <property type="entry name" value="SH3_MPP1"/>
    <property type="match status" value="1"/>
</dbReference>
<dbReference type="FunFam" id="3.30.63.10:FF:000002">
    <property type="entry name" value="Guanylate kinase 1"/>
    <property type="match status" value="1"/>
</dbReference>
<dbReference type="Gene3D" id="2.30.42.10">
    <property type="match status" value="1"/>
</dbReference>
<dbReference type="Gene3D" id="3.40.50.300">
    <property type="entry name" value="P-loop containing nucleotide triphosphate hydrolases"/>
    <property type="match status" value="1"/>
</dbReference>
<dbReference type="Gene3D" id="2.30.30.40">
    <property type="entry name" value="SH3 Domains"/>
    <property type="match status" value="1"/>
</dbReference>
<dbReference type="InterPro" id="IPR008145">
    <property type="entry name" value="GK/Ca_channel_bsu"/>
</dbReference>
<dbReference type="InterPro" id="IPR008144">
    <property type="entry name" value="Guanylate_kin-like_dom"/>
</dbReference>
<dbReference type="InterPro" id="IPR020590">
    <property type="entry name" value="Guanylate_kinase_CS"/>
</dbReference>
<dbReference type="InterPro" id="IPR050716">
    <property type="entry name" value="MAGUK"/>
</dbReference>
<dbReference type="InterPro" id="IPR035475">
    <property type="entry name" value="MPP1_SH3"/>
</dbReference>
<dbReference type="InterPro" id="IPR027417">
    <property type="entry name" value="P-loop_NTPase"/>
</dbReference>
<dbReference type="InterPro" id="IPR001478">
    <property type="entry name" value="PDZ"/>
</dbReference>
<dbReference type="InterPro" id="IPR036034">
    <property type="entry name" value="PDZ_sf"/>
</dbReference>
<dbReference type="InterPro" id="IPR036028">
    <property type="entry name" value="SH3-like_dom_sf"/>
</dbReference>
<dbReference type="InterPro" id="IPR001452">
    <property type="entry name" value="SH3_domain"/>
</dbReference>
<dbReference type="PANTHER" id="PTHR23122">
    <property type="entry name" value="MEMBRANE-ASSOCIATED GUANYLATE KINASE MAGUK"/>
    <property type="match status" value="1"/>
</dbReference>
<dbReference type="Pfam" id="PF00625">
    <property type="entry name" value="Guanylate_kin"/>
    <property type="match status" value="1"/>
</dbReference>
<dbReference type="Pfam" id="PF00595">
    <property type="entry name" value="PDZ"/>
    <property type="match status" value="1"/>
</dbReference>
<dbReference type="Pfam" id="PF00018">
    <property type="entry name" value="SH3_1"/>
    <property type="match status" value="1"/>
</dbReference>
<dbReference type="SMART" id="SM00072">
    <property type="entry name" value="GuKc"/>
    <property type="match status" value="1"/>
</dbReference>
<dbReference type="SMART" id="SM00228">
    <property type="entry name" value="PDZ"/>
    <property type="match status" value="1"/>
</dbReference>
<dbReference type="SMART" id="SM00326">
    <property type="entry name" value="SH3"/>
    <property type="match status" value="1"/>
</dbReference>
<dbReference type="SUPFAM" id="SSF52540">
    <property type="entry name" value="P-loop containing nucleoside triphosphate hydrolases"/>
    <property type="match status" value="1"/>
</dbReference>
<dbReference type="SUPFAM" id="SSF50156">
    <property type="entry name" value="PDZ domain-like"/>
    <property type="match status" value="1"/>
</dbReference>
<dbReference type="SUPFAM" id="SSF50044">
    <property type="entry name" value="SH3-domain"/>
    <property type="match status" value="1"/>
</dbReference>
<dbReference type="PROSITE" id="PS00856">
    <property type="entry name" value="GUANYLATE_KINASE_1"/>
    <property type="match status" value="1"/>
</dbReference>
<dbReference type="PROSITE" id="PS50052">
    <property type="entry name" value="GUANYLATE_KINASE_2"/>
    <property type="match status" value="1"/>
</dbReference>
<dbReference type="PROSITE" id="PS50106">
    <property type="entry name" value="PDZ"/>
    <property type="match status" value="1"/>
</dbReference>
<dbReference type="PROSITE" id="PS50002">
    <property type="entry name" value="SH3"/>
    <property type="match status" value="1"/>
</dbReference>
<feature type="chain" id="PRO_0000094567" description="55 kDa erythrocyte membrane protein">
    <location>
        <begin position="1"/>
        <end position="467"/>
    </location>
</feature>
<feature type="domain" description="PDZ" evidence="3">
    <location>
        <begin position="73"/>
        <end position="154"/>
    </location>
</feature>
<feature type="domain" description="SH3" evidence="4">
    <location>
        <begin position="160"/>
        <end position="230"/>
    </location>
</feature>
<feature type="domain" description="Guanylate kinase-like" evidence="2">
    <location>
        <begin position="283"/>
        <end position="452"/>
    </location>
</feature>
<evidence type="ECO:0000250" key="1"/>
<evidence type="ECO:0000255" key="2">
    <source>
        <dbReference type="PROSITE-ProRule" id="PRU00100"/>
    </source>
</evidence>
<evidence type="ECO:0000255" key="3">
    <source>
        <dbReference type="PROSITE-ProRule" id="PRU00143"/>
    </source>
</evidence>
<evidence type="ECO:0000255" key="4">
    <source>
        <dbReference type="PROSITE-ProRule" id="PRU00192"/>
    </source>
</evidence>
<evidence type="ECO:0000305" key="5"/>
<keyword id="KW-0449">Lipoprotein</keyword>
<keyword id="KW-0472">Membrane</keyword>
<keyword id="KW-0564">Palmitate</keyword>
<keyword id="KW-1185">Reference proteome</keyword>
<keyword id="KW-0728">SH3 domain</keyword>
<comment type="function">
    <text evidence="1">May play a role in the regulation of neutrophil polarization.</text>
</comment>
<comment type="subcellular location">
    <subcellularLocation>
        <location evidence="1">Membrane</location>
        <topology evidence="1">Peripheral membrane protein</topology>
    </subcellularLocation>
</comment>
<comment type="PTM">
    <text evidence="1">Extensively palmitoylated.</text>
</comment>
<comment type="similarity">
    <text evidence="5">Belongs to the MAGUK family.</text>
</comment>
<gene>
    <name type="primary">mpp1</name>
</gene>
<accession>P49697</accession>
<name>EM55_TAKRU</name>
<organism>
    <name type="scientific">Takifugu rubripes</name>
    <name type="common">Japanese pufferfish</name>
    <name type="synonym">Fugu rubripes</name>
    <dbReference type="NCBI Taxonomy" id="31033"/>
    <lineage>
        <taxon>Eukaryota</taxon>
        <taxon>Metazoa</taxon>
        <taxon>Chordata</taxon>
        <taxon>Craniata</taxon>
        <taxon>Vertebrata</taxon>
        <taxon>Euteleostomi</taxon>
        <taxon>Actinopterygii</taxon>
        <taxon>Neopterygii</taxon>
        <taxon>Teleostei</taxon>
        <taxon>Neoteleostei</taxon>
        <taxon>Acanthomorphata</taxon>
        <taxon>Eupercaria</taxon>
        <taxon>Tetraodontiformes</taxon>
        <taxon>Tetradontoidea</taxon>
        <taxon>Tetraodontidae</taxon>
        <taxon>Takifugu</taxon>
    </lineage>
</organism>
<sequence>MTLKSNKNEPALILDSVTSVRTALSDLYLEQLLQNKPTDKQAAMQTYENKGAEVFSNGSAGHINGAELSRMREVAFEKNQSEPLGVTLKLNDKQRCSVARILHGGMIHRQGSLHEGDEIAEINGKSVANQTVDQLQKILKETNGVVTMKIIPRPQSRSKPCEMYMRGQFDYDPAMDDLIPCKEAGLKFQTGDIIQIINKQDPNWWQGRVENNAANFAGLIPSPELQEWRAASKSKAREGSQSCSPFGKKKKCKDKYLAKHSSIFDQLDVISYEEVVRLPAFKRKTLVLIGAPGVGRRHIKNVLLTKYPEKFSYPVPHTTRPQRKGDANGEEYFFISNEAMTKCISANELLEYGSFQGYMFGTITETIQKIHEQDKIALLDVEPQTMKVLRTADFGPLMVFIAPTDTAAQTENLQMIQKESETILNTYRQYFDVVLVNNDVNESVKIVEEALEHATTTPQWVPVSWVY</sequence>
<reference key="1">
    <citation type="journal article" date="1995" name="Genomics">
        <title>Genomic structure and nucleotide sequence of the p55 gene of the puffer fish Fugu rubripes.</title>
        <authorList>
            <person name="Elgar G.S."/>
            <person name="Rattray F.M."/>
            <person name="Greystrong J.S."/>
            <person name="Brenner S."/>
        </authorList>
    </citation>
    <scope>NUCLEOTIDE SEQUENCE [GENOMIC DNA]</scope>
    <source>
        <tissue>Testis</tissue>
    </source>
</reference>